<feature type="chain" id="PRO_0000193060" description="N-(5-amino-5-carboxypentanoyl)-L-cysteinyl-D-valine synthase">
    <location>
        <begin position="1"/>
        <end position="3746"/>
    </location>
</feature>
<feature type="domain" description="Carrier 1" evidence="2">
    <location>
        <begin position="818"/>
        <end position="895"/>
    </location>
</feature>
<feature type="domain" description="Carrier 2" evidence="2">
    <location>
        <begin position="1902"/>
        <end position="1979"/>
    </location>
</feature>
<feature type="domain" description="Carrier 3" evidence="2">
    <location>
        <begin position="2991"/>
        <end position="3066"/>
    </location>
</feature>
<feature type="region of interest" description="Adenylation (A) domain 1" evidence="1 14">
    <location>
        <begin position="299"/>
        <end position="711"/>
    </location>
</feature>
<feature type="region of interest" description="Condensation (C) domain 1" evidence="1 22">
    <location>
        <begin position="918"/>
        <end position="1372"/>
    </location>
</feature>
<feature type="region of interest" description="Adenylation (A) domain 2" evidence="1 14">
    <location>
        <begin position="1391"/>
        <end position="1801"/>
    </location>
</feature>
<feature type="region of interest" description="Condensation (C) domain 2" evidence="1 22">
    <location>
        <begin position="1994"/>
        <end position="2434"/>
    </location>
</feature>
<feature type="region of interest" description="Adenylation (A) domain 3" evidence="1 14">
    <location>
        <begin position="2478"/>
        <end position="2883"/>
    </location>
</feature>
<feature type="region of interest" description="Epimerase (E) domain" evidence="1 8">
    <location>
        <begin position="3084"/>
        <end position="3500"/>
    </location>
</feature>
<feature type="region of interest" description="Thioesterase (TE) domain" evidence="1 8">
    <location>
        <begin position="3530"/>
        <end position="3732"/>
    </location>
</feature>
<feature type="modified residue" description="O-(pantetheine 4'-phosphoryl)serine" evidence="2">
    <location>
        <position position="855"/>
    </location>
</feature>
<feature type="modified residue" description="O-(pantetheine 4'-phosphoryl)serine" evidence="2">
    <location>
        <position position="1939"/>
    </location>
</feature>
<feature type="modified residue" description="O-(pantetheine 4'-phosphoryl)serine" evidence="2">
    <location>
        <position position="3026"/>
    </location>
</feature>
<feature type="mutagenesis site" description="Impairs epimerase activity and blocks tripeptide ACV production." evidence="8">
    <original>EGHGRE</original>
    <variation>LGFGLL</variation>
    <location>
        <begin position="3339"/>
        <end position="3344"/>
    </location>
</feature>
<feature type="mutagenesis site" description="Impairs tripeptide ACV production." evidence="8">
    <original>S</original>
    <variation>A</variation>
    <location>
        <position position="3599"/>
    </location>
</feature>
<proteinExistence type="evidence at protein level"/>
<organism>
    <name type="scientific">Penicillium chrysogenum</name>
    <name type="common">Penicillium notatum</name>
    <dbReference type="NCBI Taxonomy" id="5076"/>
    <lineage>
        <taxon>Eukaryota</taxon>
        <taxon>Fungi</taxon>
        <taxon>Dikarya</taxon>
        <taxon>Ascomycota</taxon>
        <taxon>Pezizomycotina</taxon>
        <taxon>Eurotiomycetes</taxon>
        <taxon>Eurotiomycetidae</taxon>
        <taxon>Eurotiales</taxon>
        <taxon>Aspergillaceae</taxon>
        <taxon>Penicillium</taxon>
        <taxon>Penicillium chrysogenum species complex</taxon>
    </lineage>
</organism>
<protein>
    <recommendedName>
        <fullName evidence="19">N-(5-amino-5-carboxypentanoyl)-L-cysteinyl-D-valine synthase</fullName>
        <shortName evidence="19">ACV synthetase</shortName>
        <shortName evidence="19">ACVS</shortName>
        <ecNumber evidence="5 7 8 14 15">6.3.2.26</ecNumber>
    </recommendedName>
    <alternativeName>
        <fullName evidence="17">Delta-(L-alpha-aminoadipyl)-L-cysteinyl-D-valine synthetase</fullName>
    </alternativeName>
    <alternativeName>
        <fullName evidence="17">Nonribosomal peptide synthetase acvA</fullName>
    </alternativeName>
    <alternativeName>
        <fullName evidence="16">Penicillin biosynthetis cluster p rotein acvA</fullName>
    </alternativeName>
</protein>
<accession>P19787</accession>
<accession>P26046</accession>
<name>ACVA_PENCH</name>
<gene>
    <name evidence="17" type="primary">acvA</name>
    <name evidence="18" type="synonym">pcbAB</name>
</gene>
<keyword id="KW-0045">Antibiotic biosynthesis</keyword>
<keyword id="KW-0067">ATP-binding</keyword>
<keyword id="KW-0963">Cytoplasm</keyword>
<keyword id="KW-0436">Ligase</keyword>
<keyword id="KW-0460">Magnesium</keyword>
<keyword id="KW-0472">Membrane</keyword>
<keyword id="KW-0511">Multifunctional enzyme</keyword>
<keyword id="KW-0547">Nucleotide-binding</keyword>
<keyword id="KW-0596">Phosphopantetheine</keyword>
<keyword id="KW-0597">Phosphoprotein</keyword>
<keyword id="KW-0677">Repeat</keyword>
<keyword id="KW-0926">Vacuole</keyword>
<evidence type="ECO:0000255" key="1"/>
<evidence type="ECO:0000255" key="2">
    <source>
        <dbReference type="PROSITE-ProRule" id="PRU00258"/>
    </source>
</evidence>
<evidence type="ECO:0000269" key="3">
    <source>
    </source>
</evidence>
<evidence type="ECO:0000269" key="4">
    <source>
    </source>
</evidence>
<evidence type="ECO:0000269" key="5">
    <source>
    </source>
</evidence>
<evidence type="ECO:0000269" key="6">
    <source>
    </source>
</evidence>
<evidence type="ECO:0000269" key="7">
    <source>
    </source>
</evidence>
<evidence type="ECO:0000269" key="8">
    <source>
    </source>
</evidence>
<evidence type="ECO:0000269" key="9">
    <source>
    </source>
</evidence>
<evidence type="ECO:0000269" key="10">
    <source>
    </source>
</evidence>
<evidence type="ECO:0000269" key="11">
    <source>
    </source>
</evidence>
<evidence type="ECO:0000269" key="12">
    <source>
    </source>
</evidence>
<evidence type="ECO:0000269" key="13">
    <source>
    </source>
</evidence>
<evidence type="ECO:0000269" key="14">
    <source>
    </source>
</evidence>
<evidence type="ECO:0000269" key="15">
    <source>
    </source>
</evidence>
<evidence type="ECO:0000303" key="16">
    <source>
    </source>
</evidence>
<evidence type="ECO:0000303" key="17">
    <source>
    </source>
</evidence>
<evidence type="ECO:0000303" key="18">
    <source>
    </source>
</evidence>
<evidence type="ECO:0000303" key="19">
    <source>
    </source>
</evidence>
<evidence type="ECO:0000305" key="20"/>
<evidence type="ECO:0000305" key="21">
    <source>
    </source>
</evidence>
<evidence type="ECO:0000305" key="22">
    <source>
    </source>
</evidence>
<comment type="function">
    <text evidence="5 7 8 9 13 14 15 21">Nonribosomal peptide synthetase; part of the gene cluster that mediates the biosynthesis of penicillin, the world's most important antibiotic (PubMed:1368505, PubMed:21889568, PubMed:9266851). The trimodular NRPS acvA produces the tripeptide N-[(5S)-5-amino-5-carboxypentanoyl]-L-cysteinyl-D-valine (LLD-ACV or ACV) via condensation of the 3 residues L-2-aminoadipate, L-cysteine and L-valine (PubMed:19686863, PubMed:21889568, PubMed:9266851, PubMed:9355751). The precursor amino acids for penicillin biosynthesis are withdrawn from the vacuolar amino acid pool by the MFS-type transporter penV (PubMed:22777282, PubMed:8416970). Each of the constituent amino acids of the tripeptide ACV are activated as aminoacyl-adenylates with peptide bonds formed through the participation of amino acid thioester intermediates (PubMed:21889568, PubMed:9266851). The penicillin biosynthesis occurs via 3 enzymatic steps, the first corresponding to the production of the tripeptide N-[(5S)-5-amino-5-carboxypentanoyl]-L-cysteinyl-D-valine (LLD-ACV or ACV) by the NRPS acvA. The tripeptide ACV is then cyclized to isopenicillin N (IPN) by the isopenicillin N synthase ipnA that forms the beta-lactam nucleus. Finally, the alpha-aminoadipyl side chain is exchanged for phenylacetic acid by the isopenicillin N acyltransferase aatA to yield penicillin in the peroxisomal matrix (Probable) (PubMed:1368505).</text>
</comment>
<comment type="catalytic activity">
    <reaction evidence="5 7 8 14 15">
        <text>L-2-aminoadipate + L-valine + L-cysteine + 3 ATP + H2O = N-[(5S)-5-amino-5-carboxypentanoyl]-L-cysteinyl-D-valine + 3 AMP + 3 diphosphate + 3 H(+)</text>
        <dbReference type="Rhea" id="RHEA:23196"/>
        <dbReference type="ChEBI" id="CHEBI:15377"/>
        <dbReference type="ChEBI" id="CHEBI:15378"/>
        <dbReference type="ChEBI" id="CHEBI:30616"/>
        <dbReference type="ChEBI" id="CHEBI:33019"/>
        <dbReference type="ChEBI" id="CHEBI:35235"/>
        <dbReference type="ChEBI" id="CHEBI:57762"/>
        <dbReference type="ChEBI" id="CHEBI:58572"/>
        <dbReference type="ChEBI" id="CHEBI:58672"/>
        <dbReference type="ChEBI" id="CHEBI:456215"/>
        <dbReference type="EC" id="6.3.2.26"/>
    </reaction>
    <physiologicalReaction direction="left-to-right" evidence="5 7 8 14 15">
        <dbReference type="Rhea" id="RHEA:23197"/>
    </physiologicalReaction>
</comment>
<comment type="cofactor">
    <cofactor>
        <name>pantetheine 4'-phosphate</name>
        <dbReference type="ChEBI" id="CHEBI:47942"/>
    </cofactor>
    <text evidence="1">Binds 3 phosphopantetheines covalently.</text>
</comment>
<comment type="cofactor">
    <cofactor evidence="15">
        <name>Mg(2+)</name>
        <dbReference type="ChEBI" id="CHEBI:18420"/>
    </cofactor>
</comment>
<comment type="biophysicochemical properties">
    <kinetics>
        <KM evidence="15">46 uM for L-2-aminoadipate</KM>
        <KM evidence="15">80 uM for L-cysteine</KM>
        <KM evidence="15">83 uM for L-valine</KM>
    </kinetics>
    <phDependence>
        <text evidence="15">Optimum pH is 8.4.</text>
    </phDependence>
</comment>
<comment type="pathway">
    <text evidence="5 7 8 14 15">Antibiotic biosynthesis; penicillin G biosynthesis; penicillin G from L-alpha-aminoadipate and L-cysteine and L-valine: step 1/3.</text>
</comment>
<comment type="subcellular location">
    <subcellularLocation>
        <location evidence="4">Cytoplasm</location>
        <location evidence="4">Cytosol</location>
    </subcellularLocation>
    <subcellularLocation>
        <location evidence="6 13">Vacuole membrane</location>
        <topology evidence="13">Peripheral membrane protein</topology>
    </subcellularLocation>
    <text evidence="13">Loosely attached to the vacuoles.</text>
</comment>
<comment type="induction">
    <text evidence="3 10 11 12">Expression is repressed by glucose (PubMed:3096965). The transcription factor rfx1 controls penicillin biosynthesis through the regulation of the acvA, ipnA and aatA transcription (PubMed:22960281). The promoter heptameric sequence 5'-TTAGTAA-3' is the binding site for the transcriptional activator named penicillin transcriptional activator 1 (PTA1) (PubMed:10644695). Multiple additional DNA-binding proteins appear to bind to the promoter, including the nuclear factor A (NF-A) that recognizes an the 5'-GCCAAGCC-3' sequence or the global-acting nitrogen regulatory protein NIT2 that binds strongly at a single site that contains two closely spaced GATA sequences (PubMed:7614558).</text>
</comment>
<comment type="domain">
    <text evidence="8 14">NRP synthetases are composed of discrete domains (adenylation (A), thiolation (T) or peptidyl carrier protein (PCP) and condensation (C) domains) which when grouped together are referred to as a single module. Each module is responsible for the recognition (via the A domain) and incorporation of a single amino acid into the growing peptide product. Thus, an NRP synthetase is generally composed of one or more modules and can terminate in a thioesterase domain (TE) that releases the newly synthesized peptide from the enzyme. Occasionally, epimerase (E) domains (responsible for L- to D-amino acid conversion) are present within the NRP synthetase. GliP has the following architecture: A-T-C-A-T-C-A-T-E-TE.</text>
</comment>
<comment type="similarity">
    <text evidence="20">Belongs to the NRP synthetase family.</text>
</comment>
<comment type="sequence caution" evidence="20">
    <conflict type="erroneous gene model prediction">
        <sequence resource="EMBL-CDS" id="AAA63415"/>
    </conflict>
</comment>
<sequence length="3746" mass="421076">MGPSNPAMAYFKPSTRDTMDPCSGNAADGSIRVRFRGGIERWKECVNQVPERCDLSGLTTDSTRYQLASTGFGDASAAYQERLMTVPVDVHAALQELCLERRVSVGSVINFSVHQMLKGFGNGTHTITASLHREQNLQNSSPSWVVSPTIVTHENRDGWSVAQAVESIEAGRGSEKESVTAIDSGSSLVKMGLFDLLVSFVDADDARIPCFDFPLAVIVRECDANLSLTLRFSDCLFNEETICNFTDALNILLAEAVIGRVTPVADIELLSAEQKQQLEEWNNTDGEYPSSKRLHHLIEEVVERHEDKIAVVCDERELTYGELNAQGNSLARYLRSIGILPEQLVALFLDKSEKLIVTILGVWKSGAAYVPIDPTYPDERVRFVLDDTKARAIIASNQHVERLQREVIGDRNLCIIRLEPLLASLAQDSSKFPAHNLDDLPLTSQQLAYVTYTSGTTGFPKGIFKQHTNVVNSITDLSARYGVAGQHHEAILLFSACVFEPFVRQTLMALVNGHLLAVINDVEKYDADTLLPFIRRHSITYLNGTASVLQEYDFSDCPSLNRIILVGENLTEARYLALRQRFKNRILNEYGFTESAFVTALKIFDPESTRKDTSLGRPVRNVKCYILNPSLKRVPIGATGELHIGGLGISKGYLNRPELTPHRFIPNPFQTDCEKQLGINSLMYKTGDLARWLPNGEVEYLGRADFQIKLRGIRIEPGEIETMLAMYPRVRTSLVVSKKLRNGPEETTNEHLVGYYVCDSASVSEADLLSFLEKKLPRYMIPTRLVQLSQIPVNVNGKADLRALPAVDISNSTEVRSDLRGDTEIALGEIWADVLGARQRSVSRNDNFFRLGGHSITCIQLIARIRQRLSVSISVEDVFATRTLERMADLLQNKQQEKCDKPHEAPTELLEENAATDNIYLANSLQQGFVYHYLKSMEQSDAYVMQSVLRYNTTLSPDLFQRAWKHAQQSFPALRLRFSWEKEVFQLLDQDPPLDWRFLYFTDVAAGAVEDRKLEDLRRQDLTERFKLDVGRLFRVYLIKHSENRFTCLFSCHHAILDGWSLPLLFEKVHETYLQLLHGDNLTSSMDDPYTRTQRYLHAHREDHLDFWAGVVQKINERCDMNALLNERSRYKVQLADYDQVQEQRQLTIALSGDAWLADLRQTCSAQGITLHSILQFVWHAVLHAYGGGTHTITGTTISGRNLPILGIERAVGPYINTLPLVLDHSTFKDKTIMEAIEDVQAKVNVMNSRGNVELGRLHKTDLKHGLFDSLFVLENYPNLDKSRTLEHQTELGYSIEGGTEKLNYPLAVIAREVETTGGFTVSICYASELFEEVMISELLHMVQDTLMQVARGLNEPVGSLEYLSSIQLEQLAAWNATEAEFPDTTLHEMFENEASQKPDKIAVVYEETSLTYRELNERANRMAHQLRSDVSPNPNEVIALVMDKSEHMIVNILAVWKSGGAYVPIDPGYPNDRIQYILEDTQALAVIADSCYLPRIKGMAASGTLLYPSVLPANPDSKWSVSNPSPLSRSTDLAYIIYTSGTTGRPKGVTVEHHGVVNLQVSLSKVFGLRDTDDEVILSFSNYVFDHFVEQMTDAILNGQTLLVLNDGMRGDKERLYRYIEKNRVTYLSGTPSVVSMYEFSRFKDHLRRVDCVGEAFSEPVFDKIRETFHGLVINGYGPTEVSITTHKRLYPFPERRMDKSIGQQVHNSTSYVLNEDMKRTPIGSVGELYLGGEGVVRGYHNRADVTAERFIPNPFQSEEDKREGRNSRLYKTGDLVRWIPGSSGEVEYLGRNDFQVKIRGLRIELGEIEAILSSYHGIKQSVVIAKDCREGAQKFLVGYYVADAALPSAAIRRFMQSRLPGYMVPSRLILVSKFPVTPSGKLDTKALPPAEEESEIDVVPPRSEIERSLCDIWAELLEMHPEEIGIYSDFFSLGGDSLKSTKLSFMIHESFNRAVSVSALFCHRTVEAQTHLILNDAADVHEITPIDCNDTQMIPVSRAQERLLFIHEFENGSNAYNIDAAFELPGSVDASLLEQALRGNLARHEALRTLLVKDHATGIYLQKVLSPDEAQGMFSVNVDTAKQVERLDQEIASLSQHVFRLDDELPWEARILKLESGGLYLILAFHHTCFDAWSLKVFEQELRALYAALQKTKSAANLPALKAQYKEYALYHRRQLSGDRMRNLSDFWLRKLIGLEPLQLITDRPRPVQFKYDGDDLSIELSKKETENLRGVAKRCKSSLYVVLVSVYCVMLASYANQSDVSVGIPVSHRTHPQFQSVIGFFVNLVVLRVDISQSAICGLIRRVMKELVDAQLHQDMPFQEVTKLLQVDNDPSRHPLVQNVFNFESRANGEHDARSEDEGSLAFNQYRPVQPVDSVAKFDLNATVTELESGLRVNFNYATSLFNKSTIQGFLHTYEYLLRQLSELSAEGINEDTQLSLVRPTENGDLHLPLAQSPLATTAEEQKVASLNQAFEREAFLAAEKIAVVQGDRALSYADLNGQANQLARYIQSVSCIGADDGIALMLEKSIDTIICILAIWKAGAAYVPLDPTYPPGRVQLILEEIKAKAVLVHSSHASKCERHGAKVIAVDSPAIETAVSQQSAADLPTIASLGNLAYIIFTSGTSGKPKGVLVEQKAVLLLRDALRERYFGRDCTKHHGVLFLSNYVFDFSVEQLVLSVLSGHKLIVPPAEFVADDEFYRMASTHGLSYLSGTPSLLQKIDLARLDHLQVVTAAGEELHATQYEKMRRRFNGPIYNAYGVTETTVYNIIAEFTTNSIFENALREVLPGTRAYVLNAALQPVPFDAVGELYLAGDSVTRGYLNQPLLTDQRFIPNPFCKEEDIAMGRFARLYKTGDLVRSRFNRQQQPQLEYLGRGDLQIKMRGYRIEISEVQNVLTSSPGVREGAVVAKYENNDTYSRTAHSLVGYYTTDNETVSEADILTFMKARLPTYMVPSHLCCLEGALPVTINGKLDVRRLPEIINDSAQSSYSPPRNIIEAKMCRLWESALGMERCGIDDDLFKLGGDSITSLHLVAQIHNQVGCKITVRDIFEHRTARALHDHVFMKDSDRSNVTQFRTEQGPVIGEAPLLPIQDWFLSKALQHPMYWNHTFYVRTPELDVDSLSAAVRDLQQYHDVFRMRLKREEVGFVQSFAEDFSPAQLRVLNVKDVDGSAAVNEILDGWQSGFNLENGPIGSIGYLHGYEDRSARVWFSVHHMAIDTVSWQILVRDLQTLYRNGSLGSKGSSFRQWAEAIQNYKASDSERNHWNKLVMETASSISALPTSTGSRVRLSRSLSPEKTASLIQGGIDRQDVSVYDSLLTSVGLALQHIAPTGPSMVTIEGHGREEVDQTLDVSRTMGWFTTMYPFEIPRLSTENIVQGVVAVSERFRQVPARGVGYGTLYGYTQHPLPQVTVNYLGQLARKQSKPKEWVLAVGDNEFEYGLMTSPEDKDRSSSAVDVTAVCIDGTMIIDVDSAWSLEESEQFISSIEEGLNKILDGRASQQTSRFPDVPQPAETYTPYFEYLEPPRQGPTLFLLPPGEGGAESYFNNIVKRLRQTNMVVFNNYYLHSKRLRTFEELAEMYLDQVRGIQPHGPYHFIGWSFGGILAMEMSRRLVASDEKIGFLGIIDTYFNVRGATRTIGLGDTEILDPIHHIYNPDPANFQRLPSATDRIVLFKAMRPNNKYESENQRRLYEYYDGTRLNGLDSLLPSDSDVQLVPLTDDTHFSWVGNPQQVEQMCATIKEHLARY</sequence>
<reference key="1">
    <citation type="journal article" date="1990" name="J. Biol. Chem.">
        <title>The cluster of penicillin biosynthetic genes. Identification and characterization of the pcbAB gene encoding the alpha-aminoadipyl-cysteinyl-valine synthetase and linkage to the pcbC and penDE genes.</title>
        <authorList>
            <person name="Diez B."/>
            <person name="Gutierrez S."/>
            <person name="Barredo J.L."/>
            <person name="van Solingen P."/>
            <person name="van der Voort L.H.M."/>
            <person name="Martin J.F."/>
        </authorList>
    </citation>
    <scope>NUCLEOTIDE SEQUENCE [GENOMIC DNA]</scope>
    <source>
        <strain>AS-P-78</strain>
    </source>
</reference>
<reference key="2">
    <citation type="journal article" date="1990" name="EMBO J.">
        <title>The multifunctional peptide synthetase performing the first step of penicillin biosynthesis in Penicillium chrysogenum is a 421,073 dalton protein similar to Bacillus brevis peptide antibiotic synthetases.</title>
        <authorList>
            <person name="Smith D.J."/>
            <person name="Earl A.J."/>
            <person name="Turner G."/>
        </authorList>
    </citation>
    <scope>NUCLEOTIDE SEQUENCE [GENOMIC DNA]</scope>
    <scope>IDENTIFICATION</scope>
    <source>
        <strain>CMI 314652</strain>
    </source>
</reference>
<reference key="3">
    <citation type="journal article" date="1986" name="J. Bacteriol.">
        <title>Glucose represses formation of delta-(L-alpha-aminoadipyl)-L-cysteinyl-D-valine and isopenicillin N synthase but not penicillin acyltransferase in Penicillium chrysogenum.</title>
        <authorList>
            <person name="Revilla G."/>
            <person name="Ramos F.R."/>
            <person name="Lopez-Nieto M.J."/>
            <person name="Alvarez E."/>
            <person name="Martin J.F."/>
        </authorList>
    </citation>
    <scope>INDUCTION</scope>
</reference>
<reference key="4">
    <citation type="journal article" date="1990" name="Biotechnology (N.Y.)">
        <title>Cloning and heterologous expression of the penicillin biosynthetic gene cluster from penicillum chrysogenum.</title>
        <authorList>
            <person name="Smith D.J."/>
            <person name="Burnham M.K."/>
            <person name="Edwards J."/>
            <person name="Earl A.J."/>
            <person name="Turner G."/>
        </authorList>
    </citation>
    <scope>FUNCTION</scope>
    <scope>CATALYTIC ACTIVITY</scope>
    <scope>PATHWAY</scope>
</reference>
<reference key="5">
    <citation type="journal article" date="1991" name="EMBO J.">
        <title>Localization of the pathway of the penicillin biosynthesis in Penicillium chrysogenum.</title>
        <authorList>
            <person name="Mueller W.H."/>
            <person name="van der Krift T.P."/>
            <person name="Krouwer A.J."/>
            <person name="Woesten H.A."/>
            <person name="van der Voort L.H."/>
            <person name="Smaal E.B."/>
            <person name="Verkleij A.J."/>
        </authorList>
    </citation>
    <scope>SUBCELLULAR LOCATION</scope>
</reference>
<reference key="6">
    <citation type="journal article" date="1993" name="J. Biol. Chem.">
        <title>Subcellular compartmentation of penicillin biosynthesis in Penicillium chrysogenum. The amino acid precursors are derived from the vacuole.</title>
        <authorList>
            <person name="Lendenfeld T."/>
            <person name="Ghali D."/>
            <person name="Wolschek M."/>
            <person name="Kubicek-Pranz E.M."/>
            <person name="Kubicek C.P."/>
        </authorList>
    </citation>
    <scope>SUBCELLULAR LOCATION</scope>
    <scope>FUNCTION</scope>
</reference>
<reference key="7">
    <citation type="journal article" date="1995" name="Curr. Genet.">
        <title>Nuclear DNA-binding proteins which recognize the intergenic control region of penicillin biosynthetic genes.</title>
        <authorList>
            <person name="Feng B."/>
            <person name="Friedlin E."/>
            <person name="Marzluf G.A."/>
        </authorList>
    </citation>
    <scope>INDUCTION</scope>
</reference>
<reference key="8">
    <citation type="journal article" date="1997" name="Biochem. Biophys. Res. Commun.">
        <title>ACV synthetase: expression of amino acid activating domains of the Penicillium chrysogenum enzyme in Aspergillus nidulans.</title>
        <authorList>
            <person name="Etchegaray A."/>
            <person name="Dieckmann R."/>
            <person name="Kennedy J."/>
            <person name="Turner G."/>
            <person name="von Doehren H."/>
        </authorList>
    </citation>
    <scope>FUNCTION</scope>
    <scope>DOMAIN</scope>
    <scope>CATALYTIC ACTIVITY</scope>
    <scope>PATHWAY</scope>
</reference>
<reference key="9">
    <citation type="journal article" date="1997" name="Biochem. J.">
        <title>Purification and characterization of delta-(L-alpha-aminoadipyl)-L-cysteinyl-D-valine synthetase from Penicillium chrysogenum.</title>
        <authorList>
            <person name="Theilgaard H.B."/>
            <person name="Kristiansen K.N."/>
            <person name="Henriksen C.M."/>
            <person name="Nielsen J."/>
        </authorList>
    </citation>
    <scope>FUNCTION</scope>
    <scope>CATALYTIC ACTIVITY</scope>
    <scope>BIOPHYSICOCHEMICAL PROPERTIES</scope>
    <scope>COFACTOR</scope>
    <scope>PATHWAY</scope>
</reference>
<reference key="10">
    <citation type="journal article" date="2000" name="J. Biol. Chem.">
        <title>A novel heptameric sequence (TTAGTAA) is the binding site for a protein required for high level expression of pcbAB, the first gene of the penicillin biosynthesis in Penicillium chrysogenum.</title>
        <authorList>
            <person name="Kosalkova K."/>
            <person name="Marcos A.T."/>
            <person name="Fierro F."/>
            <person name="Hernando-Rico V."/>
            <person name="Gutierrez S."/>
            <person name="Martin J.F."/>
        </authorList>
    </citation>
    <scope>INDUCTION</scope>
</reference>
<reference key="11">
    <citation type="journal article" date="2002" name="Fungal Genet. Biol.">
        <title>delta-(L-alpha-Aminoadipyl)-L-cysteinyl-D-valine synthetase, that mediates the first committed step in penicillin biosynthesis, is a cytosolic enzyme.</title>
        <authorList>
            <person name="van der Lende T.R."/>
            <person name="van de Kamp M."/>
            <person name="Berg M."/>
            <person name="Sjollema K."/>
            <person name="Bovenberg R.A."/>
            <person name="Veenhuis M."/>
            <person name="Konings W.N."/>
            <person name="Driessen A.J."/>
        </authorList>
    </citation>
    <scope>SUBCELLULAR LOCATION</scope>
</reference>
<reference key="12">
    <citation type="journal article" date="2009" name="Metab. Eng.">
        <title>Heterologous production of non-ribosomal peptide LLD-ACV in Saccharomyces cerevisiae.</title>
        <authorList>
            <person name="Siewers V."/>
            <person name="Chen X."/>
            <person name="Huang L."/>
            <person name="Zhang J."/>
            <person name="Nielsen J."/>
        </authorList>
    </citation>
    <scope>FUNCTION</scope>
    <scope>CATALYTIC ACTIVITY</scope>
    <scope>PATHWAY</scope>
</reference>
<reference key="13">
    <citation type="journal article" date="2012" name="Biochimie">
        <title>Motifs in the C-terminal region of the Penicillium chrysogenum ACV synthetase are essential for valine epimerization and processivity of tripeptide formation.</title>
        <authorList>
            <person name="Wu X."/>
            <person name="Garcia-Estrada C."/>
            <person name="Vaca I."/>
            <person name="Martin J.F."/>
        </authorList>
    </citation>
    <scope>FUNCTION</scope>
    <scope>DOMAIN</scope>
    <scope>CATALYTIC ACTIVITY</scope>
    <scope>MUTAGENESIS OF 3339-GLU--GLU-3344 AND SER-3599</scope>
    <scope>PATHWAY</scope>
</reference>
<reference key="14">
    <citation type="journal article" date="2012" name="Fungal Genet. Biol.">
        <title>The regulatory factor PcRFX1 controls the expression of the three genes of beta-lactam biosynthesis in Penicillium chrysogenum.</title>
        <authorList>
            <person name="Dominguez-Santos R."/>
            <person name="Martin J.F."/>
            <person name="Kosalkova K."/>
            <person name="Prieto C."/>
            <person name="Ullan R.V."/>
            <person name="Garcia-Estrada C."/>
        </authorList>
    </citation>
    <scope>INDUCTION</scope>
</reference>
<reference key="15">
    <citation type="journal article" date="2013" name="Appl. Microbiol. Biotechnol.">
        <title>A vacuolar membrane protein affects drastically the biosynthesis of the ACV tripeptide and the beta-lactam pathway of Penicillium chrysogenum.</title>
        <authorList>
            <person name="Fernandez-Aguado M."/>
            <person name="Teijeira F."/>
            <person name="Martin J.F."/>
            <person name="Ullan R.V."/>
        </authorList>
    </citation>
    <scope>FUNCTION</scope>
</reference>
<reference key="16">
    <citation type="journal article" date="2014" name="Metab. Eng.">
        <title>New insights into the isopenicillin N transport in Penicillium chrysogenum.</title>
        <authorList>
            <person name="Fernandez-Aguado M."/>
            <person name="Martin J.F."/>
            <person name="Rodriguez-Castro R."/>
            <person name="Garcia-Estrada C."/>
            <person name="Albillos S.M."/>
            <person name="Teijeira F."/>
            <person name="Ullan R.V."/>
        </authorList>
    </citation>
    <scope>FUNCTION</scope>
</reference>
<dbReference type="EC" id="6.3.2.26" evidence="5 7 8 14 15"/>
<dbReference type="EMBL" id="M57425">
    <property type="protein sequence ID" value="AAA63415.1"/>
    <property type="status" value="ALT_SEQ"/>
    <property type="molecule type" value="Genomic_DNA"/>
</dbReference>
<dbReference type="EMBL" id="X54296">
    <property type="protein sequence ID" value="CAA38195.1"/>
    <property type="molecule type" value="Genomic_DNA"/>
</dbReference>
<dbReference type="PIR" id="A37886">
    <property type="entry name" value="YGPLV8"/>
</dbReference>
<dbReference type="PIR" id="S13134">
    <property type="entry name" value="YGPLV3"/>
</dbReference>
<dbReference type="SMR" id="P19787"/>
<dbReference type="ESTHER" id="pench-acvt">
    <property type="family name" value="Thioesterase"/>
</dbReference>
<dbReference type="BioCyc" id="MetaCyc:MONOMER-13331"/>
<dbReference type="UniPathway" id="UPA00149">
    <property type="reaction ID" value="UER00239"/>
</dbReference>
<dbReference type="GO" id="GO:0005829">
    <property type="term" value="C:cytosol"/>
    <property type="evidence" value="ECO:0000314"/>
    <property type="project" value="UniProt"/>
</dbReference>
<dbReference type="GO" id="GO:0005774">
    <property type="term" value="C:vacuolar membrane"/>
    <property type="evidence" value="ECO:0000314"/>
    <property type="project" value="UniProtKB"/>
</dbReference>
<dbReference type="GO" id="GO:0005524">
    <property type="term" value="F:ATP binding"/>
    <property type="evidence" value="ECO:0007669"/>
    <property type="project" value="UniProtKB-KW"/>
</dbReference>
<dbReference type="GO" id="GO:0050564">
    <property type="term" value="F:N-(5-amino-5-carboxypentanoyl)-L-cysteinyl-D-valine synthase activity"/>
    <property type="evidence" value="ECO:0000314"/>
    <property type="project" value="UniProtKB"/>
</dbReference>
<dbReference type="GO" id="GO:0031177">
    <property type="term" value="F:phosphopantetheine binding"/>
    <property type="evidence" value="ECO:0007669"/>
    <property type="project" value="InterPro"/>
</dbReference>
<dbReference type="GO" id="GO:0043041">
    <property type="term" value="P:amino acid activation for nonribosomal peptide biosynthetic process"/>
    <property type="evidence" value="ECO:0007669"/>
    <property type="project" value="TreeGrafter"/>
</dbReference>
<dbReference type="GO" id="GO:0042318">
    <property type="term" value="P:penicillin biosynthetic process"/>
    <property type="evidence" value="ECO:0000314"/>
    <property type="project" value="UniProtKB"/>
</dbReference>
<dbReference type="CDD" id="cd17648">
    <property type="entry name" value="A_NRPS_ACVS-like"/>
    <property type="match status" value="1"/>
</dbReference>
<dbReference type="CDD" id="cd19534">
    <property type="entry name" value="E_NRPS"/>
    <property type="match status" value="1"/>
</dbReference>
<dbReference type="CDD" id="cd19539">
    <property type="entry name" value="SgcC5_NRPS-like"/>
    <property type="match status" value="1"/>
</dbReference>
<dbReference type="FunFam" id="3.30.559.30:FF:000069">
    <property type="entry name" value="N-(5-amino-5-carboxypentanoyl)-L-cysteinyl-D-valine synthase"/>
    <property type="match status" value="1"/>
</dbReference>
<dbReference type="FunFam" id="1.10.1200.10:FF:000016">
    <property type="entry name" value="Non-ribosomal peptide synthase"/>
    <property type="match status" value="1"/>
</dbReference>
<dbReference type="FunFam" id="3.40.50.980:FF:000001">
    <property type="entry name" value="Non-ribosomal peptide synthetase"/>
    <property type="match status" value="3"/>
</dbReference>
<dbReference type="FunFam" id="1.10.1200.10:FF:000005">
    <property type="entry name" value="Nonribosomal peptide synthetase 1"/>
    <property type="match status" value="1"/>
</dbReference>
<dbReference type="Gene3D" id="3.30.300.30">
    <property type="match status" value="3"/>
</dbReference>
<dbReference type="Gene3D" id="3.40.50.980">
    <property type="match status" value="4"/>
</dbReference>
<dbReference type="Gene3D" id="1.10.1200.10">
    <property type="entry name" value="ACP-like"/>
    <property type="match status" value="3"/>
</dbReference>
<dbReference type="Gene3D" id="3.40.50.1820">
    <property type="entry name" value="alpha/beta hydrolase"/>
    <property type="match status" value="1"/>
</dbReference>
<dbReference type="Gene3D" id="3.30.559.10">
    <property type="entry name" value="Chloramphenicol acetyltransferase-like domain"/>
    <property type="match status" value="3"/>
</dbReference>
<dbReference type="Gene3D" id="2.30.38.10">
    <property type="entry name" value="Luciferase, Domain 3"/>
    <property type="match status" value="2"/>
</dbReference>
<dbReference type="Gene3D" id="3.40.50.12780">
    <property type="entry name" value="N-terminal domain of ligase-like"/>
    <property type="match status" value="1"/>
</dbReference>
<dbReference type="Gene3D" id="3.30.559.30">
    <property type="entry name" value="Nonribosomal peptide synthetase, condensation domain"/>
    <property type="match status" value="4"/>
</dbReference>
<dbReference type="InterPro" id="IPR010071">
    <property type="entry name" value="AA_adenyl_dom"/>
</dbReference>
<dbReference type="InterPro" id="IPR029058">
    <property type="entry name" value="AB_hydrolase_fold"/>
</dbReference>
<dbReference type="InterPro" id="IPR036736">
    <property type="entry name" value="ACP-like_sf"/>
</dbReference>
<dbReference type="InterPro" id="IPR025110">
    <property type="entry name" value="AMP-bd_C"/>
</dbReference>
<dbReference type="InterPro" id="IPR045851">
    <property type="entry name" value="AMP-bd_C_sf"/>
</dbReference>
<dbReference type="InterPro" id="IPR020845">
    <property type="entry name" value="AMP-binding_CS"/>
</dbReference>
<dbReference type="InterPro" id="IPR000873">
    <property type="entry name" value="AMP-dep_synth/lig_dom"/>
</dbReference>
<dbReference type="InterPro" id="IPR042099">
    <property type="entry name" value="ANL_N_sf"/>
</dbReference>
<dbReference type="InterPro" id="IPR023213">
    <property type="entry name" value="CAT-like_dom_sf"/>
</dbReference>
<dbReference type="InterPro" id="IPR001242">
    <property type="entry name" value="Condensatn"/>
</dbReference>
<dbReference type="InterPro" id="IPR020806">
    <property type="entry name" value="PKS_PP-bd"/>
</dbReference>
<dbReference type="InterPro" id="IPR009081">
    <property type="entry name" value="PP-bd_ACP"/>
</dbReference>
<dbReference type="InterPro" id="IPR006162">
    <property type="entry name" value="Ppantetheine_attach_site"/>
</dbReference>
<dbReference type="InterPro" id="IPR001031">
    <property type="entry name" value="Thioesterase"/>
</dbReference>
<dbReference type="NCBIfam" id="TIGR01733">
    <property type="entry name" value="AA-adenyl-dom"/>
    <property type="match status" value="3"/>
</dbReference>
<dbReference type="NCBIfam" id="NF003417">
    <property type="entry name" value="PRK04813.1"/>
    <property type="match status" value="3"/>
</dbReference>
<dbReference type="PANTHER" id="PTHR45527:SF1">
    <property type="entry name" value="FATTY ACID SYNTHASE"/>
    <property type="match status" value="1"/>
</dbReference>
<dbReference type="PANTHER" id="PTHR45527">
    <property type="entry name" value="NONRIBOSOMAL PEPTIDE SYNTHETASE"/>
    <property type="match status" value="1"/>
</dbReference>
<dbReference type="Pfam" id="PF00501">
    <property type="entry name" value="AMP-binding"/>
    <property type="match status" value="3"/>
</dbReference>
<dbReference type="Pfam" id="PF13193">
    <property type="entry name" value="AMP-binding_C"/>
    <property type="match status" value="2"/>
</dbReference>
<dbReference type="Pfam" id="PF00668">
    <property type="entry name" value="Condensation"/>
    <property type="match status" value="3"/>
</dbReference>
<dbReference type="Pfam" id="PF00550">
    <property type="entry name" value="PP-binding"/>
    <property type="match status" value="3"/>
</dbReference>
<dbReference type="Pfam" id="PF00975">
    <property type="entry name" value="Thioesterase"/>
    <property type="match status" value="1"/>
</dbReference>
<dbReference type="SMART" id="SM00823">
    <property type="entry name" value="PKS_PP"/>
    <property type="match status" value="3"/>
</dbReference>
<dbReference type="SUPFAM" id="SSF56801">
    <property type="entry name" value="Acetyl-CoA synthetase-like"/>
    <property type="match status" value="3"/>
</dbReference>
<dbReference type="SUPFAM" id="SSF47336">
    <property type="entry name" value="ACP-like"/>
    <property type="match status" value="3"/>
</dbReference>
<dbReference type="SUPFAM" id="SSF53474">
    <property type="entry name" value="alpha/beta-Hydrolases"/>
    <property type="match status" value="1"/>
</dbReference>
<dbReference type="SUPFAM" id="SSF52777">
    <property type="entry name" value="CoA-dependent acyltransferases"/>
    <property type="match status" value="7"/>
</dbReference>
<dbReference type="PROSITE" id="PS00455">
    <property type="entry name" value="AMP_BINDING"/>
    <property type="match status" value="3"/>
</dbReference>
<dbReference type="PROSITE" id="PS50075">
    <property type="entry name" value="CARRIER"/>
    <property type="match status" value="3"/>
</dbReference>
<dbReference type="PROSITE" id="PS00012">
    <property type="entry name" value="PHOSPHOPANTETHEINE"/>
    <property type="match status" value="3"/>
</dbReference>